<comment type="function">
    <text evidence="1">One of the primary rRNA binding proteins, it binds directly to 16S rRNA where it nucleates assembly of the head domain of the 30S subunit.</text>
</comment>
<comment type="subunit">
    <text>Part of the 30S ribosomal subunit.</text>
</comment>
<comment type="subcellular location">
    <subcellularLocation>
        <location>Plastid</location>
        <location>Chloroplast</location>
    </subcellularLocation>
</comment>
<comment type="similarity">
    <text evidence="2">Belongs to the universal ribosomal protein uS7 family.</text>
</comment>
<accession>Q71T50</accession>
<name>RR7_HYDCA</name>
<keyword id="KW-0150">Chloroplast</keyword>
<keyword id="KW-0934">Plastid</keyword>
<keyword id="KW-0687">Ribonucleoprotein</keyword>
<keyword id="KW-0689">Ribosomal protein</keyword>
<keyword id="KW-0694">RNA-binding</keyword>
<keyword id="KW-0699">rRNA-binding</keyword>
<sequence>MSRRGTAEEKTAKSDPIYRNRLVNMLVNRILKHGKKSLAYQIIYRALKKIQQKTETNPLSVLRQAICGVTPDIAVKARRVGGSTHQVPIEIGSTQGKALAIRWLLWASRKRPGRNMAFKLSSELVDAAKGSGDAIRKKEETHRMAEANRAFAHFR</sequence>
<gene>
    <name type="primary">rps7</name>
</gene>
<feature type="chain" id="PRO_0000124462" description="Small ribosomal subunit protein uS7c">
    <location>
        <begin position="1"/>
        <end position="155"/>
    </location>
</feature>
<dbReference type="EMBL" id="AF238069">
    <property type="protein sequence ID" value="AAQ14212.1"/>
    <property type="molecule type" value="Genomic_DNA"/>
</dbReference>
<dbReference type="RefSeq" id="YP_009366885.1">
    <property type="nucleotide sequence ID" value="NC_034702.1"/>
</dbReference>
<dbReference type="RefSeq" id="YP_009366898.1">
    <property type="nucleotide sequence ID" value="NC_034702.1"/>
</dbReference>
<dbReference type="SMR" id="Q71T50"/>
<dbReference type="GeneID" id="32883687"/>
<dbReference type="GeneID" id="32883796"/>
<dbReference type="GO" id="GO:0009507">
    <property type="term" value="C:chloroplast"/>
    <property type="evidence" value="ECO:0007669"/>
    <property type="project" value="UniProtKB-SubCell"/>
</dbReference>
<dbReference type="GO" id="GO:0015935">
    <property type="term" value="C:small ribosomal subunit"/>
    <property type="evidence" value="ECO:0007669"/>
    <property type="project" value="InterPro"/>
</dbReference>
<dbReference type="GO" id="GO:0019843">
    <property type="term" value="F:rRNA binding"/>
    <property type="evidence" value="ECO:0007669"/>
    <property type="project" value="UniProtKB-UniRule"/>
</dbReference>
<dbReference type="GO" id="GO:0003735">
    <property type="term" value="F:structural constituent of ribosome"/>
    <property type="evidence" value="ECO:0007669"/>
    <property type="project" value="InterPro"/>
</dbReference>
<dbReference type="GO" id="GO:0006412">
    <property type="term" value="P:translation"/>
    <property type="evidence" value="ECO:0007669"/>
    <property type="project" value="UniProtKB-UniRule"/>
</dbReference>
<dbReference type="CDD" id="cd14871">
    <property type="entry name" value="uS7_Chloroplast"/>
    <property type="match status" value="1"/>
</dbReference>
<dbReference type="FunFam" id="1.10.455.10:FF:000001">
    <property type="entry name" value="30S ribosomal protein S7"/>
    <property type="match status" value="1"/>
</dbReference>
<dbReference type="Gene3D" id="1.10.455.10">
    <property type="entry name" value="Ribosomal protein S7 domain"/>
    <property type="match status" value="1"/>
</dbReference>
<dbReference type="HAMAP" id="MF_00480_B">
    <property type="entry name" value="Ribosomal_uS7_B"/>
    <property type="match status" value="1"/>
</dbReference>
<dbReference type="InterPro" id="IPR000235">
    <property type="entry name" value="Ribosomal_uS7"/>
</dbReference>
<dbReference type="InterPro" id="IPR005717">
    <property type="entry name" value="Ribosomal_uS7_bac/org-type"/>
</dbReference>
<dbReference type="InterPro" id="IPR020606">
    <property type="entry name" value="Ribosomal_uS7_CS"/>
</dbReference>
<dbReference type="InterPro" id="IPR023798">
    <property type="entry name" value="Ribosomal_uS7_dom"/>
</dbReference>
<dbReference type="InterPro" id="IPR036823">
    <property type="entry name" value="Ribosomal_uS7_dom_sf"/>
</dbReference>
<dbReference type="NCBIfam" id="TIGR01029">
    <property type="entry name" value="rpsG_bact"/>
    <property type="match status" value="1"/>
</dbReference>
<dbReference type="PANTHER" id="PTHR11205">
    <property type="entry name" value="RIBOSOMAL PROTEIN S7"/>
    <property type="match status" value="1"/>
</dbReference>
<dbReference type="Pfam" id="PF00177">
    <property type="entry name" value="Ribosomal_S7"/>
    <property type="match status" value="1"/>
</dbReference>
<dbReference type="PIRSF" id="PIRSF002122">
    <property type="entry name" value="RPS7p_RPS7a_RPS5e_RPS7o"/>
    <property type="match status" value="1"/>
</dbReference>
<dbReference type="SUPFAM" id="SSF47973">
    <property type="entry name" value="Ribosomal protein S7"/>
    <property type="match status" value="1"/>
</dbReference>
<dbReference type="PROSITE" id="PS00052">
    <property type="entry name" value="RIBOSOMAL_S7"/>
    <property type="match status" value="1"/>
</dbReference>
<geneLocation type="chloroplast"/>
<proteinExistence type="inferred from homology"/>
<reference key="1">
    <citation type="journal article" date="2003" name="Mol. Phylogenet. Evol.">
        <title>Inference of higher-order relationships in the cycads from a large chloroplast data set.</title>
        <authorList>
            <person name="Rai H.S."/>
            <person name="O'Brien H.E."/>
            <person name="Reeves P.A."/>
            <person name="Olmstead R.G."/>
            <person name="Graham S.W."/>
        </authorList>
    </citation>
    <scope>NUCLEOTIDE SEQUENCE [GENOMIC DNA]</scope>
</reference>
<organism>
    <name type="scientific">Hydrastis canadensis</name>
    <name type="common">Goldenseal</name>
    <dbReference type="NCBI Taxonomy" id="13569"/>
    <lineage>
        <taxon>Eukaryota</taxon>
        <taxon>Viridiplantae</taxon>
        <taxon>Streptophyta</taxon>
        <taxon>Embryophyta</taxon>
        <taxon>Tracheophyta</taxon>
        <taxon>Spermatophyta</taxon>
        <taxon>Magnoliopsida</taxon>
        <taxon>Ranunculales</taxon>
        <taxon>Ranunculaceae</taxon>
        <taxon>Hydrastidoideae</taxon>
        <taxon>Hydrastis</taxon>
    </lineage>
</organism>
<protein>
    <recommendedName>
        <fullName evidence="2">Small ribosomal subunit protein uS7c</fullName>
    </recommendedName>
    <alternativeName>
        <fullName>30S ribosomal protein S7, chloroplastic</fullName>
    </alternativeName>
</protein>
<evidence type="ECO:0000250" key="1"/>
<evidence type="ECO:0000305" key="2"/>